<reference key="1">
    <citation type="journal article" date="2002" name="Nature">
        <title>Complete genome sequence of the model actinomycete Streptomyces coelicolor A3(2).</title>
        <authorList>
            <person name="Bentley S.D."/>
            <person name="Chater K.F."/>
            <person name="Cerdeno-Tarraga A.-M."/>
            <person name="Challis G.L."/>
            <person name="Thomson N.R."/>
            <person name="James K.D."/>
            <person name="Harris D.E."/>
            <person name="Quail M.A."/>
            <person name="Kieser H."/>
            <person name="Harper D."/>
            <person name="Bateman A."/>
            <person name="Brown S."/>
            <person name="Chandra G."/>
            <person name="Chen C.W."/>
            <person name="Collins M."/>
            <person name="Cronin A."/>
            <person name="Fraser A."/>
            <person name="Goble A."/>
            <person name="Hidalgo J."/>
            <person name="Hornsby T."/>
            <person name="Howarth S."/>
            <person name="Huang C.-H."/>
            <person name="Kieser T."/>
            <person name="Larke L."/>
            <person name="Murphy L.D."/>
            <person name="Oliver K."/>
            <person name="O'Neil S."/>
            <person name="Rabbinowitsch E."/>
            <person name="Rajandream M.A."/>
            <person name="Rutherford K.M."/>
            <person name="Rutter S."/>
            <person name="Seeger K."/>
            <person name="Saunders D."/>
            <person name="Sharp S."/>
            <person name="Squares R."/>
            <person name="Squares S."/>
            <person name="Taylor K."/>
            <person name="Warren T."/>
            <person name="Wietzorrek A."/>
            <person name="Woodward J.R."/>
            <person name="Barrell B.G."/>
            <person name="Parkhill J."/>
            <person name="Hopwood D.A."/>
        </authorList>
    </citation>
    <scope>NUCLEOTIDE SEQUENCE [LARGE SCALE GENOMIC DNA]</scope>
    <source>
        <strain>ATCC BAA-471 / A3(2) / M145</strain>
    </source>
</reference>
<accession>Q9X8I6</accession>
<organism>
    <name type="scientific">Streptomyces coelicolor (strain ATCC BAA-471 / A3(2) / M145)</name>
    <dbReference type="NCBI Taxonomy" id="100226"/>
    <lineage>
        <taxon>Bacteria</taxon>
        <taxon>Bacillati</taxon>
        <taxon>Actinomycetota</taxon>
        <taxon>Actinomycetes</taxon>
        <taxon>Kitasatosporales</taxon>
        <taxon>Streptomycetaceae</taxon>
        <taxon>Streptomyces</taxon>
        <taxon>Streptomyces albidoflavus group</taxon>
    </lineage>
</organism>
<dbReference type="EC" id="6.3.4.19" evidence="1"/>
<dbReference type="EMBL" id="AL939116">
    <property type="protein sequence ID" value="CAB42759.1"/>
    <property type="molecule type" value="Genomic_DNA"/>
</dbReference>
<dbReference type="PIR" id="T36332">
    <property type="entry name" value="T36332"/>
</dbReference>
<dbReference type="RefSeq" id="NP_627612.1">
    <property type="nucleotide sequence ID" value="NC_003888.3"/>
</dbReference>
<dbReference type="RefSeq" id="WP_003975427.1">
    <property type="nucleotide sequence ID" value="NZ_VNID01000023.1"/>
</dbReference>
<dbReference type="SMR" id="Q9X8I6"/>
<dbReference type="FunCoup" id="Q9X8I6">
    <property type="interactions" value="17"/>
</dbReference>
<dbReference type="STRING" id="100226.gene:17761028"/>
<dbReference type="PaxDb" id="100226-SCO3406"/>
<dbReference type="GeneID" id="91385551"/>
<dbReference type="KEGG" id="sco:SCO3406"/>
<dbReference type="PATRIC" id="fig|100226.15.peg.3469"/>
<dbReference type="eggNOG" id="COG0037">
    <property type="taxonomic scope" value="Bacteria"/>
</dbReference>
<dbReference type="HOGENOM" id="CLU_018869_1_0_11"/>
<dbReference type="InParanoid" id="Q9X8I6"/>
<dbReference type="OrthoDB" id="5244702at2"/>
<dbReference type="PhylomeDB" id="Q9X8I6"/>
<dbReference type="Proteomes" id="UP000001973">
    <property type="component" value="Chromosome"/>
</dbReference>
<dbReference type="GO" id="GO:0005737">
    <property type="term" value="C:cytoplasm"/>
    <property type="evidence" value="ECO:0007669"/>
    <property type="project" value="UniProtKB-SubCell"/>
</dbReference>
<dbReference type="GO" id="GO:0005524">
    <property type="term" value="F:ATP binding"/>
    <property type="evidence" value="ECO:0007669"/>
    <property type="project" value="UniProtKB-UniRule"/>
</dbReference>
<dbReference type="GO" id="GO:0032267">
    <property type="term" value="F:tRNA(Ile)-lysidine synthase activity"/>
    <property type="evidence" value="ECO:0007669"/>
    <property type="project" value="UniProtKB-EC"/>
</dbReference>
<dbReference type="GO" id="GO:0006400">
    <property type="term" value="P:tRNA modification"/>
    <property type="evidence" value="ECO:0007669"/>
    <property type="project" value="UniProtKB-UniRule"/>
</dbReference>
<dbReference type="CDD" id="cd01992">
    <property type="entry name" value="TilS_N"/>
    <property type="match status" value="1"/>
</dbReference>
<dbReference type="Gene3D" id="1.20.59.20">
    <property type="match status" value="1"/>
</dbReference>
<dbReference type="Gene3D" id="3.40.50.620">
    <property type="entry name" value="HUPs"/>
    <property type="match status" value="1"/>
</dbReference>
<dbReference type="HAMAP" id="MF_01161">
    <property type="entry name" value="tRNA_Ile_lys_synt"/>
    <property type="match status" value="1"/>
</dbReference>
<dbReference type="InterPro" id="IPR014729">
    <property type="entry name" value="Rossmann-like_a/b/a_fold"/>
</dbReference>
<dbReference type="InterPro" id="IPR011063">
    <property type="entry name" value="TilS/TtcA_N"/>
</dbReference>
<dbReference type="InterPro" id="IPR012094">
    <property type="entry name" value="tRNA_Ile_lys_synt"/>
</dbReference>
<dbReference type="InterPro" id="IPR012795">
    <property type="entry name" value="tRNA_Ile_lys_synt_N"/>
</dbReference>
<dbReference type="InterPro" id="IPR015262">
    <property type="entry name" value="tRNA_Ile_lys_synt_subst-bd"/>
</dbReference>
<dbReference type="NCBIfam" id="TIGR02432">
    <property type="entry name" value="lysidine_TilS_N"/>
    <property type="match status" value="1"/>
</dbReference>
<dbReference type="PANTHER" id="PTHR43033">
    <property type="entry name" value="TRNA(ILE)-LYSIDINE SYNTHASE-RELATED"/>
    <property type="match status" value="1"/>
</dbReference>
<dbReference type="PANTHER" id="PTHR43033:SF1">
    <property type="entry name" value="TRNA(ILE)-LYSIDINE SYNTHASE-RELATED"/>
    <property type="match status" value="1"/>
</dbReference>
<dbReference type="Pfam" id="PF01171">
    <property type="entry name" value="ATP_bind_3"/>
    <property type="match status" value="1"/>
</dbReference>
<dbReference type="Pfam" id="PF09179">
    <property type="entry name" value="TilS"/>
    <property type="match status" value="1"/>
</dbReference>
<dbReference type="SUPFAM" id="SSF52402">
    <property type="entry name" value="Adenine nucleotide alpha hydrolases-like"/>
    <property type="match status" value="1"/>
</dbReference>
<dbReference type="SUPFAM" id="SSF82829">
    <property type="entry name" value="MesJ substrate recognition domain-like"/>
    <property type="match status" value="1"/>
</dbReference>
<proteinExistence type="inferred from homology"/>
<feature type="chain" id="PRO_0000181776" description="tRNA(Ile)-lysidine synthase">
    <location>
        <begin position="1"/>
        <end position="352"/>
    </location>
</feature>
<feature type="binding site" evidence="1">
    <location>
        <begin position="58"/>
        <end position="63"/>
    </location>
    <ligand>
        <name>ATP</name>
        <dbReference type="ChEBI" id="CHEBI:30616"/>
    </ligand>
</feature>
<protein>
    <recommendedName>
        <fullName evidence="1">tRNA(Ile)-lysidine synthase</fullName>
        <ecNumber evidence="1">6.3.4.19</ecNumber>
    </recommendedName>
    <alternativeName>
        <fullName evidence="1">tRNA(Ile)-2-lysyl-cytidine synthase</fullName>
    </alternativeName>
    <alternativeName>
        <fullName evidence="1">tRNA(Ile)-lysidine synthetase</fullName>
    </alternativeName>
</protein>
<name>TILS_STRCO</name>
<keyword id="KW-0067">ATP-binding</keyword>
<keyword id="KW-0963">Cytoplasm</keyword>
<keyword id="KW-0436">Ligase</keyword>
<keyword id="KW-0547">Nucleotide-binding</keyword>
<keyword id="KW-1185">Reference proteome</keyword>
<keyword id="KW-0819">tRNA processing</keyword>
<gene>
    <name evidence="1" type="primary">tilS</name>
    <name type="ordered locus">SCO3406</name>
    <name type="ORF">SCE9.13c</name>
</gene>
<evidence type="ECO:0000255" key="1">
    <source>
        <dbReference type="HAMAP-Rule" id="MF_01161"/>
    </source>
</evidence>
<sequence length="352" mass="36722">MGPHPAVAAIRLAVRRVLHDILTELNTPAGVPAATAVERTPERAPGLPTAPLVLVACSGGADSMALASALAFEAPRLGVRAGGVTVDHGLQSGSDLRAEEVVLRLRELGLDPVEATAVTVGRAGGPEAAARDARYAALDAAAARHGAAAVLLGHTRDDQAETVLLGLARGSGIRSLSGMAAVSGAGGRYRRPFLQVDRQTARKACMVQSLPVWDDPHNADPAYTRSRLRHEGLPALEKALGKGVVEALARTAQLSRDDADALDTWARQAEAGVRDATGGLECAKLYALPPAVRRRILRRAALEAGAPGGALFARHIEEVDRLITGWRGQGAINLPGKVVARRQGGRLVIRQG</sequence>
<comment type="function">
    <text evidence="1">Ligates lysine onto the cytidine present at position 34 of the AUA codon-specific tRNA(Ile) that contains the anticodon CAU, in an ATP-dependent manner. Cytidine is converted to lysidine, thus changing the amino acid specificity of the tRNA from methionine to isoleucine.</text>
</comment>
<comment type="catalytic activity">
    <reaction evidence="1">
        <text>cytidine(34) in tRNA(Ile2) + L-lysine + ATP = lysidine(34) in tRNA(Ile2) + AMP + diphosphate + H(+)</text>
        <dbReference type="Rhea" id="RHEA:43744"/>
        <dbReference type="Rhea" id="RHEA-COMP:10625"/>
        <dbReference type="Rhea" id="RHEA-COMP:10670"/>
        <dbReference type="ChEBI" id="CHEBI:15378"/>
        <dbReference type="ChEBI" id="CHEBI:30616"/>
        <dbReference type="ChEBI" id="CHEBI:32551"/>
        <dbReference type="ChEBI" id="CHEBI:33019"/>
        <dbReference type="ChEBI" id="CHEBI:82748"/>
        <dbReference type="ChEBI" id="CHEBI:83665"/>
        <dbReference type="ChEBI" id="CHEBI:456215"/>
        <dbReference type="EC" id="6.3.4.19"/>
    </reaction>
</comment>
<comment type="subcellular location">
    <subcellularLocation>
        <location evidence="1">Cytoplasm</location>
    </subcellularLocation>
</comment>
<comment type="domain">
    <text>The N-terminal region contains the highly conserved SGGXDS motif, predicted to be a P-loop motif involved in ATP binding.</text>
</comment>
<comment type="similarity">
    <text evidence="1">Belongs to the tRNA(Ile)-lysidine synthase family.</text>
</comment>